<reference key="1">
    <citation type="journal article" date="2002" name="BMC Genomics">
        <title>Cynomolgus monkey testicular cDNAs for discovery of novel human genes in the human genome sequence.</title>
        <authorList>
            <person name="Osada N."/>
            <person name="Hida M."/>
            <person name="Kusuda J."/>
            <person name="Tanuma R."/>
            <person name="Hirata M."/>
            <person name="Suto Y."/>
            <person name="Hirai M."/>
            <person name="Terao K."/>
            <person name="Sugano S."/>
            <person name="Hashimoto K."/>
        </authorList>
    </citation>
    <scope>NUCLEOTIDE SEQUENCE [LARGE SCALE MRNA] (ISOFORM 2)</scope>
    <source>
        <tissue>Testis</tissue>
    </source>
</reference>
<reference key="2">
    <citation type="submission" date="2005-06" db="EMBL/GenBank/DDBJ databases">
        <title>DNA sequences of macaque genes expressed in brain or testis and its evolutionary implications.</title>
        <authorList>
            <consortium name="International consortium for macaque cDNA sequencing and analysis"/>
        </authorList>
    </citation>
    <scope>NUCLEOTIDE SEQUENCE [LARGE SCALE MRNA] (ISOFORMS 1 AND 2)</scope>
    <source>
        <tissue>Frontal cortex</tissue>
    </source>
</reference>
<gene>
    <name type="primary">MINDY3</name>
    <name type="synonym">CARP</name>
    <name type="synonym">FAM188A</name>
    <name type="ORF">QflA-10011</name>
    <name type="ORF">QflA-13278</name>
    <name type="ORF">QtsA-14653</name>
</gene>
<sequence>MSELTKELMELVWGTKSSPGLSDTIFCRWTQGFVFSESEGSALEQFEGGPCAVIAPVQAFLLKKLLFSSEKSSWRDCSEEEQKELLCHTLCDILESACCDHSGSYCLVSWLRGKTTEETASISGSPAESSCQVEHSSALAVEELGFERFHALIQKRSFRSLPELKDAVLDQYSMWGNKFGVLLFLYSVLLTKGIENIKNEIEDASEPLIDPVYGHGSQSLINLLLTGHAVSNVWDGDRECSGMKLLGIHEQAAVGFLTLMEALRYCKVGSYLKSPKFPIWIVGSETHLTVFFAKDMALVAPEAPSEQARRVFQTYDPEDNGFIPDSLLEDVMKALDLVSDPEYINLMKNKLDPEGLGIILLGPFLQEFFPDQGSSGPESFTVYHYNGLKQSNYNEKVMYVEGTAVVMGFEDPMLQTDDTPIKRCLQTKWPYIELLWTTDRSPSLN</sequence>
<proteinExistence type="evidence at transcript level"/>
<evidence type="ECO:0000250" key="1">
    <source>
        <dbReference type="UniProtKB" id="Q8N5J2"/>
    </source>
</evidence>
<evidence type="ECO:0000250" key="2">
    <source>
        <dbReference type="UniProtKB" id="Q9H8M7"/>
    </source>
</evidence>
<evidence type="ECO:0000303" key="3">
    <source>
    </source>
</evidence>
<evidence type="ECO:0000303" key="4">
    <source ref="2"/>
</evidence>
<evidence type="ECO:0000305" key="5"/>
<protein>
    <recommendedName>
        <fullName>Ubiquitin carboxyl-terminal hydrolase MINDY-3</fullName>
        <ecNumber>3.4.19.12</ecNumber>
    </recommendedName>
    <alternativeName>
        <fullName>Deubiquitinating enzyme MINDY-3</fullName>
    </alternativeName>
    <alternativeName>
        <fullName>Protein CARP</fullName>
    </alternativeName>
</protein>
<keyword id="KW-0025">Alternative splicing</keyword>
<keyword id="KW-0053">Apoptosis</keyword>
<keyword id="KW-0378">Hydrolase</keyword>
<keyword id="KW-0539">Nucleus</keyword>
<keyword id="KW-0597">Phosphoprotein</keyword>
<keyword id="KW-0645">Protease</keyword>
<keyword id="KW-1185">Reference proteome</keyword>
<keyword id="KW-0788">Thiol protease</keyword>
<keyword id="KW-0833">Ubl conjugation pathway</keyword>
<organism>
    <name type="scientific">Macaca fascicularis</name>
    <name type="common">Crab-eating macaque</name>
    <name type="synonym">Cynomolgus monkey</name>
    <dbReference type="NCBI Taxonomy" id="9541"/>
    <lineage>
        <taxon>Eukaryota</taxon>
        <taxon>Metazoa</taxon>
        <taxon>Chordata</taxon>
        <taxon>Craniata</taxon>
        <taxon>Vertebrata</taxon>
        <taxon>Euteleostomi</taxon>
        <taxon>Mammalia</taxon>
        <taxon>Eutheria</taxon>
        <taxon>Euarchontoglires</taxon>
        <taxon>Primates</taxon>
        <taxon>Haplorrhini</taxon>
        <taxon>Catarrhini</taxon>
        <taxon>Cercopithecidae</taxon>
        <taxon>Cercopithecinae</taxon>
        <taxon>Macaca</taxon>
    </lineage>
</organism>
<accession>Q4R528</accession>
<accession>Q9BGR2</accession>
<dbReference type="EC" id="3.4.19.12"/>
<dbReference type="EMBL" id="AB169716">
    <property type="protein sequence ID" value="BAE01797.1"/>
    <property type="molecule type" value="mRNA"/>
</dbReference>
<dbReference type="EMBL" id="AB070132">
    <property type="protein sequence ID" value="BAB63077.1"/>
    <property type="molecule type" value="mRNA"/>
</dbReference>
<dbReference type="EMBL" id="AB056410">
    <property type="protein sequence ID" value="BAB33068.1"/>
    <property type="molecule type" value="mRNA"/>
</dbReference>
<dbReference type="RefSeq" id="XP_005564769.1">
    <molecule id="Q4R528-1"/>
    <property type="nucleotide sequence ID" value="XM_005564712.4"/>
</dbReference>
<dbReference type="STRING" id="9541.ENSMFAP00000042135"/>
<dbReference type="Ensembl" id="ENSMFAT00000016415.2">
    <molecule id="Q4R528-1"/>
    <property type="protein sequence ID" value="ENSMFAP00000042135.1"/>
    <property type="gene ID" value="ENSMFAG00000039849.2"/>
</dbReference>
<dbReference type="Ensembl" id="ENSMFAT00000016424.2">
    <molecule id="Q4R528-2"/>
    <property type="protein sequence ID" value="ENSMFAP00000042144.1"/>
    <property type="gene ID" value="ENSMFAG00000039849.2"/>
</dbReference>
<dbReference type="GeneID" id="102116461"/>
<dbReference type="KEGG" id="mcf:102116461"/>
<dbReference type="CTD" id="80013"/>
<dbReference type="VEuPathDB" id="HostDB:ENSMFAG00000039849"/>
<dbReference type="eggNOG" id="KOG2871">
    <property type="taxonomic scope" value="Eukaryota"/>
</dbReference>
<dbReference type="GeneTree" id="ENSGT00940000155958"/>
<dbReference type="OMA" id="VLQTKWP"/>
<dbReference type="OrthoDB" id="2180at314294"/>
<dbReference type="Proteomes" id="UP000233100">
    <property type="component" value="Chromosome 9"/>
</dbReference>
<dbReference type="Bgee" id="ENSMFAG00000039849">
    <property type="expression patterns" value="Expressed in lymph node and 13 other cell types or tissues"/>
</dbReference>
<dbReference type="GO" id="GO:0031965">
    <property type="term" value="C:nuclear membrane"/>
    <property type="evidence" value="ECO:0007669"/>
    <property type="project" value="Ensembl"/>
</dbReference>
<dbReference type="GO" id="GO:0005654">
    <property type="term" value="C:nucleoplasm"/>
    <property type="evidence" value="ECO:0007669"/>
    <property type="project" value="Ensembl"/>
</dbReference>
<dbReference type="GO" id="GO:0004843">
    <property type="term" value="F:cysteine-type deubiquitinase activity"/>
    <property type="evidence" value="ECO:0007669"/>
    <property type="project" value="UniProtKB-EC"/>
</dbReference>
<dbReference type="GO" id="GO:1990380">
    <property type="term" value="F:K48-linked deubiquitinase activity"/>
    <property type="evidence" value="ECO:0007669"/>
    <property type="project" value="Ensembl"/>
</dbReference>
<dbReference type="GO" id="GO:0006915">
    <property type="term" value="P:apoptotic process"/>
    <property type="evidence" value="ECO:0007669"/>
    <property type="project" value="UniProtKB-KW"/>
</dbReference>
<dbReference type="GO" id="GO:0071108">
    <property type="term" value="P:protein K48-linked deubiquitination"/>
    <property type="evidence" value="ECO:0007669"/>
    <property type="project" value="InterPro"/>
</dbReference>
<dbReference type="GO" id="GO:0006508">
    <property type="term" value="P:proteolysis"/>
    <property type="evidence" value="ECO:0007669"/>
    <property type="project" value="UniProtKB-KW"/>
</dbReference>
<dbReference type="FunFam" id="1.10.238.10:FF:000315">
    <property type="entry name" value="Ubiquitin carboxyl-terminal hydrolase MINDY-3"/>
    <property type="match status" value="1"/>
</dbReference>
<dbReference type="Gene3D" id="1.10.238.10">
    <property type="entry name" value="EF-hand"/>
    <property type="match status" value="1"/>
</dbReference>
<dbReference type="InterPro" id="IPR011992">
    <property type="entry name" value="EF-hand-dom_pair"/>
</dbReference>
<dbReference type="InterPro" id="IPR025257">
    <property type="entry name" value="MINDY-3/4_CD"/>
</dbReference>
<dbReference type="InterPro" id="IPR039785">
    <property type="entry name" value="MINY3/4"/>
</dbReference>
<dbReference type="PANTHER" id="PTHR12473:SF17">
    <property type="entry name" value="UBIQUITIN CARBOXYL-TERMINAL HYDROLASE MINDY-3"/>
    <property type="match status" value="1"/>
</dbReference>
<dbReference type="PANTHER" id="PTHR12473">
    <property type="entry name" value="UBIQUITIN CARBOXYL-TERMINAL HYDROLASE MINDY-4-RELATED"/>
    <property type="match status" value="1"/>
</dbReference>
<dbReference type="Pfam" id="PF13898">
    <property type="entry name" value="MINDY-3_4_CD"/>
    <property type="match status" value="1"/>
</dbReference>
<dbReference type="SMART" id="SM01174">
    <property type="entry name" value="DUF4205"/>
    <property type="match status" value="1"/>
</dbReference>
<dbReference type="SUPFAM" id="SSF47473">
    <property type="entry name" value="EF-hand"/>
    <property type="match status" value="1"/>
</dbReference>
<comment type="function">
    <text evidence="2">Hydrolase that can remove 'Lys-48'-linked conjugated ubiquitin from proteins.</text>
</comment>
<comment type="catalytic activity">
    <reaction evidence="2">
        <text>Thiol-dependent hydrolysis of ester, thioester, amide, peptide and isopeptide bonds formed by the C-terminal Gly of ubiquitin (a 76-residue protein attached to proteins as an intracellular targeting signal).</text>
        <dbReference type="EC" id="3.4.19.12"/>
    </reaction>
</comment>
<comment type="subunit">
    <text evidence="2">Interacts with COPS5.</text>
</comment>
<comment type="subcellular location">
    <subcellularLocation>
        <location evidence="2">Nucleus</location>
    </subcellularLocation>
</comment>
<comment type="alternative products">
    <event type="alternative splicing"/>
    <isoform>
        <id>Q4R528-1</id>
        <name>1</name>
        <sequence type="displayed"/>
    </isoform>
    <isoform>
        <id>Q4R528-2</id>
        <name>2</name>
        <sequence type="described" ref="VSP_031040"/>
    </isoform>
</comment>
<comment type="similarity">
    <text evidence="5">Belongs to the MINDY deubiquitinase family. FAM188 subfamily.</text>
</comment>
<feature type="chain" id="PRO_0000317561" description="Ubiquitin carboxyl-terminal hydrolase MINDY-3">
    <location>
        <begin position="1"/>
        <end position="445"/>
    </location>
</feature>
<feature type="active site" description="Nucleophile" evidence="1">
    <location>
        <position position="51"/>
    </location>
</feature>
<feature type="active site" description="Proton acceptor" evidence="1">
    <location>
        <position position="287"/>
    </location>
</feature>
<feature type="modified residue" description="Phosphoserine" evidence="2">
    <location>
        <position position="125"/>
    </location>
</feature>
<feature type="splice variant" id="VSP_031040" description="In isoform 2." evidence="3 4">
    <location>
        <begin position="1"/>
        <end position="295"/>
    </location>
</feature>
<name>MINY3_MACFA</name>